<keyword id="KW-1015">Disulfide bond</keyword>
<keyword id="KW-0325">Glycoprotein</keyword>
<keyword id="KW-0348">Hemagglutinin</keyword>
<keyword id="KW-1032">Host cell membrane</keyword>
<keyword id="KW-1043">Host membrane</keyword>
<keyword id="KW-0945">Host-virus interaction</keyword>
<keyword id="KW-0378">Hydrolase</keyword>
<keyword id="KW-0472">Membrane</keyword>
<keyword id="KW-1185">Reference proteome</keyword>
<keyword id="KW-0735">Signal-anchor</keyword>
<keyword id="KW-0812">Transmembrane</keyword>
<keyword id="KW-1133">Transmembrane helix</keyword>
<keyword id="KW-1161">Viral attachment to host cell</keyword>
<keyword id="KW-0261">Viral envelope protein</keyword>
<keyword id="KW-0946">Virion</keyword>
<keyword id="KW-1160">Virus entry into host cell</keyword>
<name>HN_SENDO</name>
<organismHost>
    <name type="scientific">Cavia cutleri</name>
    <name type="common">Guinea pig</name>
    <dbReference type="NCBI Taxonomy" id="10144"/>
</organismHost>
<organismHost>
    <name type="scientific">Cricetidae sp.</name>
    <name type="common">Hamster</name>
    <dbReference type="NCBI Taxonomy" id="36483"/>
</organismHost>
<organismHost>
    <name type="scientific">Mus musculus</name>
    <name type="common">Mouse</name>
    <dbReference type="NCBI Taxonomy" id="10090"/>
</organismHost>
<organismHost>
    <name type="scientific">Rattus norvegicus</name>
    <name type="common">Rat</name>
    <dbReference type="NCBI Taxonomy" id="10116"/>
</organismHost>
<reference key="1">
    <citation type="journal article" date="1994" name="J. Virol.">
        <title>A protease activation mutant, MVCES1, as a safe and potent live vaccine derived from currently prevailing Sendai virus.</title>
        <authorList>
            <person name="Wang X.-L."/>
            <person name="Itoh M."/>
            <person name="Hotta H."/>
            <person name="Homma M."/>
        </authorList>
    </citation>
    <scope>NUCLEOTIDE SEQUENCE [GENOMIC RNA]</scope>
    <source>
        <strain>Isolate vaccinal MVCES1</strain>
    </source>
</reference>
<reference key="2">
    <citation type="journal article" date="1997" name="J. Gen. Virol.">
        <title>Isolation of an avirulent mutant of Sendai virus with two amino acid mutations from a highly virulent field strain through adaptation to LLC-MK2 cells.</title>
        <authorList>
            <person name="Itoh M."/>
            <person name="Isegawa Y."/>
            <person name="Hotta H."/>
            <person name="Homma M."/>
        </authorList>
    </citation>
    <scope>NUCLEOTIDE SEQUENCE [GENOMIC RNA]</scope>
    <source>
        <strain>Isolate MVC11</strain>
    </source>
</reference>
<organism>
    <name type="scientific">Sendai virus (strain Ohita)</name>
    <name type="common">SeV</name>
    <dbReference type="NCBI Taxonomy" id="302272"/>
    <lineage>
        <taxon>Viruses</taxon>
        <taxon>Riboviria</taxon>
        <taxon>Orthornavirae</taxon>
        <taxon>Negarnaviricota</taxon>
        <taxon>Haploviricotina</taxon>
        <taxon>Monjiviricetes</taxon>
        <taxon>Mononegavirales</taxon>
        <taxon>Paramyxoviridae</taxon>
        <taxon>Feraresvirinae</taxon>
        <taxon>Respirovirus</taxon>
        <taxon>Respirovirus muris</taxon>
    </lineage>
</organism>
<protein>
    <recommendedName>
        <fullName>Hemagglutinin-neuraminidase</fullName>
        <shortName>HN protein</shortName>
        <shortName>Protein HANA</shortName>
        <ecNumber evidence="4">3.2.1.18</ecNumber>
    </recommendedName>
</protein>
<sequence>MDGDRSKRDSYWSTSPGGSTTKLVSDSERSGKVDTWLLILAFTQWALSIATVIICIVIAARQGYSMERYSMTVEALNTSNKEVKESLTSLIRQEVITRAANIQSSVQTGIPVLLNKNSRDVIRLIEKSCNRQELTQLCDSTIAVHHAEGIAPLEPHSFWRCPAGEPYLSSDPEVSLLPGPSLLSGSTTISGCVRLPSLSIGEAIYAYSSNLITQGCADIGKSYQVLQLGYISLNSDMFPDLNPVVSHTYDINDNRKSCSVVATGTRGYQLCSMPIVDERTDYSSDGIEDLVLDILDLKGRTKSHRYSNSEIDLDHPFSALYPSVGSGIATEGSLIFLGYGGLTTPLQGDTKCRIQGCQQVSQDTCNEALKITWLGGKQVVSVLIQVNDYLSERPRIRVTTIPITQNYLGAEGRLLKLGDQVYIYTRSSGWHSQLQIGVLDVSHPLTISWTPHEALSRPGNEDCNWYNTCPKECISGVYTDAYPLSPDAANVATVTLYANTSRVNPTIMYSNTTNIINMLRIKDVQLEAAYTTTSCITHFGKGYCFHIIEINQKSLNTLQPMLFKTSIPKLCKAES</sequence>
<gene>
    <name type="primary">HN</name>
</gene>
<comment type="function">
    <text evidence="1">Attaches the virus to sialic acid-containing cell receptors and thereby initiating infection. Binding of HN protein to the receptor induces a conformational change that allows the F protein to trigger virion/cell membranes fusion (By similarity).</text>
</comment>
<comment type="function">
    <text evidence="1">Neuraminidase activity ensures the efficient spread of the virus by dissociating the mature virions from the neuraminic acid containing glycoproteins.</text>
</comment>
<comment type="catalytic activity">
    <reaction evidence="4">
        <text>Hydrolysis of alpha-(2-&gt;3)-, alpha-(2-&gt;6)-, alpha-(2-&gt;8)- glycosidic linkages of terminal sialic acid residues in oligosaccharides, glycoproteins, glycolipids, colominic acid and synthetic substrates.</text>
        <dbReference type="EC" id="3.2.1.18"/>
    </reaction>
</comment>
<comment type="subunit">
    <text evidence="2 4">Homotetramer; composed of disulfide-linked homodimers (By similarity). Interacts with F protein trimer (By similarity).</text>
</comment>
<comment type="subcellular location">
    <subcellularLocation>
        <location evidence="7">Virion membrane</location>
        <topology evidence="7">Single-pass type II membrane protein</topology>
    </subcellularLocation>
    <subcellularLocation>
        <location evidence="7">Host cell membrane</location>
        <topology evidence="7">Single-pass type II membrane protein</topology>
    </subcellularLocation>
    <text evidence="1">Folded in the endoplasmic reticulum.</text>
</comment>
<comment type="domain">
    <text evidence="4">The C-terminus (head domain) is involved in binding the cellular receptor.</text>
</comment>
<comment type="PTM">
    <text evidence="1">N-glycosylated; glycans consist of a mixture of high mannose-type oligosaccharides and of complex-type oligosaccharides.</text>
</comment>
<comment type="similarity">
    <text evidence="7">Belongs to the paramyxoviruses hemagglutinin-neuraminidase family.</text>
</comment>
<evidence type="ECO:0000250" key="1"/>
<evidence type="ECO:0000250" key="2">
    <source>
        <dbReference type="UniProtKB" id="P04853"/>
    </source>
</evidence>
<evidence type="ECO:0000250" key="3">
    <source>
        <dbReference type="UniProtKB" id="Q91UL0"/>
    </source>
</evidence>
<evidence type="ECO:0000250" key="4">
    <source>
        <dbReference type="UniProtKB" id="Q9WAF5"/>
    </source>
</evidence>
<evidence type="ECO:0000255" key="5"/>
<evidence type="ECO:0000256" key="6">
    <source>
        <dbReference type="SAM" id="MobiDB-lite"/>
    </source>
</evidence>
<evidence type="ECO:0000305" key="7"/>
<proteinExistence type="inferred from homology"/>
<dbReference type="EC" id="3.2.1.18" evidence="4"/>
<dbReference type="EMBL" id="D26475">
    <property type="protein sequence ID" value="BAA05487.1"/>
    <property type="molecule type" value="Genomic_RNA"/>
</dbReference>
<dbReference type="EMBL" id="AB005795">
    <property type="protein sequence ID" value="BAA24391.1"/>
    <property type="molecule type" value="Genomic_RNA"/>
</dbReference>
<dbReference type="EMBL" id="AB005796">
    <property type="protein sequence ID" value="BAA24400.1"/>
    <property type="molecule type" value="Genomic_RNA"/>
</dbReference>
<dbReference type="RefSeq" id="NP_056878.1">
    <property type="nucleotide sequence ID" value="NC_001552.1"/>
</dbReference>
<dbReference type="SMR" id="Q88261"/>
<dbReference type="CAZy" id="GH83">
    <property type="family name" value="Glycoside Hydrolase Family 83"/>
</dbReference>
<dbReference type="GlyCosmos" id="Q88261">
    <property type="glycosylation" value="3 sites, No reported glycans"/>
</dbReference>
<dbReference type="GeneID" id="1489776"/>
<dbReference type="KEGG" id="vg:1489776"/>
<dbReference type="Proteomes" id="UP000006563">
    <property type="component" value="Genome"/>
</dbReference>
<dbReference type="Proteomes" id="UP000007311">
    <property type="component" value="Segment"/>
</dbReference>
<dbReference type="GO" id="GO:0020002">
    <property type="term" value="C:host cell plasma membrane"/>
    <property type="evidence" value="ECO:0007669"/>
    <property type="project" value="UniProtKB-SubCell"/>
</dbReference>
<dbReference type="GO" id="GO:0016020">
    <property type="term" value="C:membrane"/>
    <property type="evidence" value="ECO:0007669"/>
    <property type="project" value="UniProtKB-KW"/>
</dbReference>
<dbReference type="GO" id="GO:0019031">
    <property type="term" value="C:viral envelope"/>
    <property type="evidence" value="ECO:0007669"/>
    <property type="project" value="UniProtKB-KW"/>
</dbReference>
<dbReference type="GO" id="GO:0055036">
    <property type="term" value="C:virion membrane"/>
    <property type="evidence" value="ECO:0007669"/>
    <property type="project" value="UniProtKB-SubCell"/>
</dbReference>
<dbReference type="GO" id="GO:0004308">
    <property type="term" value="F:exo-alpha-sialidase activity"/>
    <property type="evidence" value="ECO:0007669"/>
    <property type="project" value="UniProtKB-EC"/>
</dbReference>
<dbReference type="GO" id="GO:0046789">
    <property type="term" value="F:host cell surface receptor binding"/>
    <property type="evidence" value="ECO:0007669"/>
    <property type="project" value="InterPro"/>
</dbReference>
<dbReference type="GO" id="GO:0046718">
    <property type="term" value="P:symbiont entry into host cell"/>
    <property type="evidence" value="ECO:0007669"/>
    <property type="project" value="UniProtKB-KW"/>
</dbReference>
<dbReference type="GO" id="GO:0019062">
    <property type="term" value="P:virion attachment to host cell"/>
    <property type="evidence" value="ECO:0007669"/>
    <property type="project" value="UniProtKB-KW"/>
</dbReference>
<dbReference type="CDD" id="cd15469">
    <property type="entry name" value="HN"/>
    <property type="match status" value="1"/>
</dbReference>
<dbReference type="FunFam" id="2.120.10.10:FF:000015">
    <property type="entry name" value="Hemagglutinin-neuraminidase"/>
    <property type="match status" value="1"/>
</dbReference>
<dbReference type="Gene3D" id="2.120.10.10">
    <property type="match status" value="1"/>
</dbReference>
<dbReference type="InterPro" id="IPR016285">
    <property type="entry name" value="Hemagglutn-neuramid"/>
</dbReference>
<dbReference type="InterPro" id="IPR000665">
    <property type="entry name" value="Hemagglutn/HN"/>
</dbReference>
<dbReference type="InterPro" id="IPR036278">
    <property type="entry name" value="Sialidase_sf"/>
</dbReference>
<dbReference type="Pfam" id="PF00423">
    <property type="entry name" value="HN"/>
    <property type="match status" value="1"/>
</dbReference>
<dbReference type="PIRSF" id="PIRSF001072">
    <property type="entry name" value="Hemagglut-neuramid_paramyxoV"/>
    <property type="match status" value="1"/>
</dbReference>
<dbReference type="SUPFAM" id="SSF50939">
    <property type="entry name" value="Sialidases"/>
    <property type="match status" value="1"/>
</dbReference>
<feature type="chain" id="PRO_0000142639" description="Hemagglutinin-neuraminidase">
    <location>
        <begin position="1"/>
        <end position="575"/>
    </location>
</feature>
<feature type="topological domain" description="Intravirion" evidence="1">
    <location>
        <begin position="1"/>
        <end position="37"/>
    </location>
</feature>
<feature type="transmembrane region" description="Helical" evidence="1">
    <location>
        <begin position="38"/>
        <end position="58"/>
    </location>
</feature>
<feature type="topological domain" description="Virion surface" evidence="1">
    <location>
        <begin position="59"/>
        <end position="575"/>
    </location>
</feature>
<feature type="region of interest" description="Disordered" evidence="6">
    <location>
        <begin position="1"/>
        <end position="25"/>
    </location>
</feature>
<feature type="region of interest" description="Incorporation in virion" evidence="1">
    <location>
        <begin position="10"/>
        <end position="14"/>
    </location>
</feature>
<feature type="region of interest" description="Involved in interaction with F protein" evidence="1">
    <location>
        <begin position="59"/>
        <end position="140"/>
    </location>
</feature>
<feature type="region of interest" description="Involved in neuraminidase activity" evidence="3">
    <location>
        <begin position="254"/>
        <end position="259"/>
    </location>
</feature>
<feature type="compositionally biased region" description="Basic and acidic residues" evidence="6">
    <location>
        <begin position="1"/>
        <end position="10"/>
    </location>
</feature>
<feature type="compositionally biased region" description="Polar residues" evidence="6">
    <location>
        <begin position="11"/>
        <end position="24"/>
    </location>
</feature>
<feature type="glycosylation site" description="N-linked (GlcNAc...) asparagine; by host" evidence="1">
    <location>
        <position position="77"/>
    </location>
</feature>
<feature type="glycosylation site" description="N-linked (GlcNAc...) asparagine; by host" evidence="1">
    <location>
        <position position="499"/>
    </location>
</feature>
<feature type="glycosylation site" description="N-linked (GlcNAc...) asparagine; by host" evidence="1">
    <location>
        <position position="511"/>
    </location>
</feature>
<feature type="disulfide bond" description="Interchain" evidence="5">
    <location>
        <position position="129"/>
    </location>
</feature>
<feature type="disulfide bond" evidence="4">
    <location>
        <begin position="192"/>
        <end position="216"/>
    </location>
</feature>
<feature type="disulfide bond" evidence="4">
    <location>
        <begin position="258"/>
        <end position="271"/>
    </location>
</feature>
<feature type="disulfide bond" evidence="4">
    <location>
        <begin position="357"/>
        <end position="469"/>
    </location>
</feature>
<feature type="disulfide bond" evidence="4">
    <location>
        <begin position="463"/>
        <end position="473"/>
    </location>
</feature>
<feature type="disulfide bond" evidence="4">
    <location>
        <begin position="535"/>
        <end position="544"/>
    </location>
</feature>
<feature type="sequence variant" description="In strain: Isolate vaccinal MVCES1.">
    <original>R</original>
    <variation>Q</variation>
    <location>
        <position position="123"/>
    </location>
</feature>
<accession>Q88261</accession>
<accession>O57288</accession>